<reference key="1">
    <citation type="journal article" date="2010" name="PLoS ONE">
        <title>The complete genome sequence of Haloferax volcanii DS2, a model archaeon.</title>
        <authorList>
            <person name="Hartman A.L."/>
            <person name="Norais C."/>
            <person name="Badger J.H."/>
            <person name="Delmas S."/>
            <person name="Haldenby S."/>
            <person name="Madupu R."/>
            <person name="Robinson J."/>
            <person name="Khouri H."/>
            <person name="Ren Q."/>
            <person name="Lowe T.M."/>
            <person name="Maupin-Furlow J."/>
            <person name="Pohlschroder M."/>
            <person name="Daniels C."/>
            <person name="Pfeiffer F."/>
            <person name="Allers T."/>
            <person name="Eisen J.A."/>
        </authorList>
    </citation>
    <scope>NUCLEOTIDE SEQUENCE [LARGE SCALE GENOMIC DNA]</scope>
    <source>
        <strain>ATCC 29605 / DSM 3757 / JCM 8879 / NBRC 14742 / NCIMB 2012 / VKM B-1768 / DS2</strain>
    </source>
</reference>
<reference key="2">
    <citation type="journal article" date="2014" name="PLoS Genet.">
        <title>Phylogenetically driven sequencing of extremely halophilic archaea reveals strategies for static and dynamic osmo-response.</title>
        <authorList>
            <person name="Becker E.A."/>
            <person name="Seitzer P.M."/>
            <person name="Tritt A."/>
            <person name="Larsen D."/>
            <person name="Krusor M."/>
            <person name="Yao A.I."/>
            <person name="Wu D."/>
            <person name="Madern D."/>
            <person name="Eisen J.A."/>
            <person name="Darling A.E."/>
            <person name="Facciotti M.T."/>
        </authorList>
    </citation>
    <scope>NUCLEOTIDE SEQUENCE [LARGE SCALE GENOMIC DNA]</scope>
    <source>
        <strain>ATCC 29605 / DSM 3757 / JCM 8879 / NBRC 14742 / NCIMB 2012 / VKM B-1768 / DS2</strain>
    </source>
</reference>
<reference key="3">
    <citation type="journal article" date="2000" name="Mol. Microbiol.">
        <title>Role of flagellins from A and B loci in flagella formation of Halobacterium salinarum.</title>
        <authorList>
            <person name="Tarasov V.Y."/>
            <person name="Pyatibratov M.G."/>
            <person name="Tang S.L."/>
            <person name="Dyall-Smith M."/>
            <person name="Fedorov O.V."/>
        </authorList>
    </citation>
    <scope>DISRUPTION PHENOTYPE</scope>
    <source>
        <strain>ATCC 29605 / DSM 3757 / JCM 8879 / NBRC 14742 / NCIMB 2012 / VKM B-1768 / DS2</strain>
    </source>
</reference>
<reference key="4">
    <citation type="journal article" date="2010" name="J. Bacteriol.">
        <title>Haloferax volcanii flagella are required for motility but are not involved in PibD-dependent surface adhesion.</title>
        <authorList>
            <person name="Tripepi M."/>
            <person name="Imam S."/>
            <person name="Pohlschroeder M."/>
        </authorList>
    </citation>
    <scope>FUNCTION</scope>
    <scope>DISRUPTION PHENOTYPE</scope>
    <source>
        <strain>ATCC 29605 / DSM 3757 / JCM 8879 / NBRC 14742 / NCIMB 2012 / VKM B-1768 / DS2</strain>
    </source>
</reference>
<reference key="5">
    <citation type="journal article" date="2012" name="J. Bacteriol.">
        <title>N-glycosylation of Haloferax volcanii flagellins requires known Agl proteins and is essential for biosynthesis of stable flagella.</title>
        <authorList>
            <person name="Tripepi M."/>
            <person name="You J."/>
            <person name="Temel S."/>
            <person name="Onder O."/>
            <person name="Brisson D."/>
            <person name="Pohlschroder M."/>
        </authorList>
    </citation>
    <scope>GLYCOSYLATION</scope>
    <source>
        <strain>ATCC 29605 / DSM 3757 / JCM 8879 / NBRC 14742 / NCIMB 2012 / VKM B-1768 / DS2</strain>
    </source>
</reference>
<reference key="6">
    <citation type="journal article" date="2013" name="Microbiology">
        <title>Haloferax volcanii cells lacking the flagellin FlgA2 are hypermotile.</title>
        <authorList>
            <person name="Tripepi M."/>
            <person name="Esquivel R.N."/>
            <person name="Wirth R."/>
            <person name="Pohlschroeder M."/>
        </authorList>
    </citation>
    <scope>FUNCTION</scope>
    <scope>DISRUPTION PHENOTYPE</scope>
    <source>
        <strain>ATCC 29605 / DSM 3757 / JCM 8879 / NBRC 14742 / NCIMB 2012 / VKM B-1768 / DS2</strain>
    </source>
</reference>
<sequence>MFNNITDDDRGQVGIGTLIVFIAMVLVAAIAAGVLVNTAGFLQATAEDAGEQSVNKVTNRVEVLNTHGTVGGEEDIDNITLTVRLAAGSDAVDMNETSIKYLSGDSVVTLTNQTVTSGANSATNDSAEGVADSDEFGLSEVTDDDGSFGVLNSMNDRYEVTIDTAAIETSDGDNTNLIGGLSTGEQVTLEITSRTGGTTQVILTMPQQLAGKTQNEPVEL</sequence>
<feature type="chain" id="PRO_0000429054" description="Flagellin A2">
    <location>
        <begin position="1"/>
        <end position="220"/>
    </location>
</feature>
<feature type="propeptide" id="PRO_0000429055" evidence="2">
    <location>
        <begin position="1"/>
        <end position="11"/>
    </location>
</feature>
<feature type="glycosylation site" description="N-linked (GlcNAc...) asparagine" evidence="2">
    <location>
        <position position="78"/>
    </location>
</feature>
<feature type="glycosylation site" description="N-linked (GlcNAc...) asparagine" evidence="2">
    <location>
        <position position="95"/>
    </location>
</feature>
<feature type="glycosylation site" description="N-linked (GlcNAc...) asparagine" evidence="2">
    <location>
        <position position="112"/>
    </location>
</feature>
<feature type="glycosylation site" description="N-linked (GlcNAc...) asparagine" evidence="2">
    <location>
        <position position="124"/>
    </location>
</feature>
<gene>
    <name type="primary">flgA2</name>
    <name type="ordered locus">HVO_1211</name>
    <name type="ORF">C498_12693</name>
</gene>
<organism>
    <name type="scientific">Haloferax volcanii (strain ATCC 29605 / DSM 3757 / JCM 8879 / NBRC 14742 / NCIMB 2012 / VKM B-1768 / DS2)</name>
    <name type="common">Halobacterium volcanii</name>
    <dbReference type="NCBI Taxonomy" id="309800"/>
    <lineage>
        <taxon>Archaea</taxon>
        <taxon>Methanobacteriati</taxon>
        <taxon>Methanobacteriota</taxon>
        <taxon>Stenosarchaea group</taxon>
        <taxon>Halobacteria</taxon>
        <taxon>Halobacteriales</taxon>
        <taxon>Haloferacaceae</taxon>
        <taxon>Haloferax</taxon>
    </lineage>
</organism>
<accession>D4GWY2</accession>
<accession>L9UTC9</accession>
<name>FLGA2_HALVD</name>
<comment type="function">
    <text evidence="4 6">Flagellin that plays both structural and regulatory roles in flagella biosynthesis. Does not constitute a major flagellin in terms of abundance contrary to FlgA1: may regulate the flagella-dependent swimming motility depending on the relative abundance of FlgA1. Not involved in PibD-dependent surface adhesion.</text>
</comment>
<comment type="subcellular location">
    <subcellularLocation>
        <location evidence="1">Archaeal flagellum</location>
    </subcellularLocation>
</comment>
<comment type="PTM">
    <text evidence="5">Glycosylated by a pentasaccharide similar to the S-layer glycoprotein, probably comprising a hexose, 2 hexuronic acids, a methyl ester of a hexuronic acid and mannose.</text>
</comment>
<comment type="disruption phenotype">
    <text evidence="3 4 6">Straight flagella, mainly at the poles (PubMed:10632878). Cells lacking flgA2 but not flgA1 are hypermotile, display an increased number of flagella per cell, as well as an increased flagellum length (PubMed:23989184). Cells lacking both flgA1 and flgA2 show defects in motility, whitout affecting surface adhesion ability (PubMed:20363933).</text>
</comment>
<comment type="similarity">
    <text evidence="7">Belongs to the archaeal flagellin family.</text>
</comment>
<comment type="sequence caution" evidence="7">
    <conflict type="erroneous initiation">
        <sequence resource="EMBL-CDS" id="ELY28104"/>
    </conflict>
    <text>Extended N-terminus.</text>
</comment>
<evidence type="ECO:0000250" key="1"/>
<evidence type="ECO:0000255" key="2"/>
<evidence type="ECO:0000269" key="3">
    <source>
    </source>
</evidence>
<evidence type="ECO:0000269" key="4">
    <source>
    </source>
</evidence>
<evidence type="ECO:0000269" key="5">
    <source>
    </source>
</evidence>
<evidence type="ECO:0000269" key="6">
    <source>
    </source>
</evidence>
<evidence type="ECO:0000305" key="7"/>
<protein>
    <recommendedName>
        <fullName>Flagellin A2</fullName>
    </recommendedName>
</protein>
<proteinExistence type="evidence at protein level"/>
<dbReference type="EMBL" id="CP001956">
    <property type="protein sequence ID" value="ADE03249.1"/>
    <property type="molecule type" value="Genomic_DNA"/>
</dbReference>
<dbReference type="EMBL" id="AOHU01000091">
    <property type="protein sequence ID" value="ELY28104.1"/>
    <property type="status" value="ALT_INIT"/>
    <property type="molecule type" value="Genomic_DNA"/>
</dbReference>
<dbReference type="RefSeq" id="WP_013035369.1">
    <property type="nucleotide sequence ID" value="NC_013967.1"/>
</dbReference>
<dbReference type="SMR" id="D4GWY2"/>
<dbReference type="STRING" id="309800.HVO_1211"/>
<dbReference type="GlyCosmos" id="D4GWY2">
    <property type="glycosylation" value="4 sites, No reported glycans"/>
</dbReference>
<dbReference type="PaxDb" id="309800-C498_12693"/>
<dbReference type="EnsemblBacteria" id="ADE03249">
    <property type="protein sequence ID" value="ADE03249"/>
    <property type="gene ID" value="HVO_1211"/>
</dbReference>
<dbReference type="GeneID" id="8924200"/>
<dbReference type="KEGG" id="hvo:HVO_1211"/>
<dbReference type="PATRIC" id="fig|309800.29.peg.2431"/>
<dbReference type="eggNOG" id="arCOG01829">
    <property type="taxonomic scope" value="Archaea"/>
</dbReference>
<dbReference type="HOGENOM" id="CLU_051124_1_0_2"/>
<dbReference type="OrthoDB" id="102632at2157"/>
<dbReference type="Proteomes" id="UP000008243">
    <property type="component" value="Chromosome"/>
</dbReference>
<dbReference type="Proteomes" id="UP000011532">
    <property type="component" value="Unassembled WGS sequence"/>
</dbReference>
<dbReference type="GO" id="GO:0097589">
    <property type="term" value="C:archaeal-type flagellum"/>
    <property type="evidence" value="ECO:0007669"/>
    <property type="project" value="UniProtKB-SubCell"/>
</dbReference>
<dbReference type="GO" id="GO:0005198">
    <property type="term" value="F:structural molecule activity"/>
    <property type="evidence" value="ECO:0007669"/>
    <property type="project" value="InterPro"/>
</dbReference>
<dbReference type="GO" id="GO:0097588">
    <property type="term" value="P:archaeal or bacterial-type flagellum-dependent cell motility"/>
    <property type="evidence" value="ECO:0007669"/>
    <property type="project" value="InterPro"/>
</dbReference>
<dbReference type="InterPro" id="IPR013373">
    <property type="entry name" value="Flagellin/pilin_N_arc"/>
</dbReference>
<dbReference type="InterPro" id="IPR002774">
    <property type="entry name" value="Flagellin_arc"/>
</dbReference>
<dbReference type="NCBIfam" id="TIGR02537">
    <property type="entry name" value="arch_flag_Nterm"/>
    <property type="match status" value="1"/>
</dbReference>
<dbReference type="PANTHER" id="PTHR35903">
    <property type="entry name" value="FLAGELLIN B1"/>
    <property type="match status" value="1"/>
</dbReference>
<dbReference type="PANTHER" id="PTHR35903:SF1">
    <property type="entry name" value="FLAGELLIN B1"/>
    <property type="match status" value="1"/>
</dbReference>
<dbReference type="Pfam" id="PF01917">
    <property type="entry name" value="Arch_flagellin"/>
    <property type="match status" value="1"/>
</dbReference>
<keyword id="KW-0974">Archaeal flagellum</keyword>
<keyword id="KW-0325">Glycoprotein</keyword>
<keyword id="KW-1185">Reference proteome</keyword>